<organism>
    <name type="scientific">Lysinibacillus sphaericus (strain C3-41)</name>
    <dbReference type="NCBI Taxonomy" id="444177"/>
    <lineage>
        <taxon>Bacteria</taxon>
        <taxon>Bacillati</taxon>
        <taxon>Bacillota</taxon>
        <taxon>Bacilli</taxon>
        <taxon>Bacillales</taxon>
        <taxon>Bacillaceae</taxon>
        <taxon>Lysinibacillus</taxon>
    </lineage>
</organism>
<sequence length="225" mass="25696">MKQVFPNDWQEILADELEKTYYHTLRQFIANEYSTQTIYPPMQDVMNAFYTTAYQDVKVIILGQDPYHGPNQAHGLSFSVKPGIPHPPSLRNMLQELQDDLGCPIPQDGTLTKWAEQGVMLLNTVLTVRAGQANSHKDQGWEQFTDAVIDKLAAREEPLIFVLWGKPAQRKKQLICKHATPHVILEAPHPSPLSAYRGFFGSKPYSKINQQLVEWDKRPIDWCLA</sequence>
<accession>B1I012</accession>
<dbReference type="EC" id="3.2.2.27" evidence="1"/>
<dbReference type="EMBL" id="CP000817">
    <property type="protein sequence ID" value="ACA38550.1"/>
    <property type="molecule type" value="Genomic_DNA"/>
</dbReference>
<dbReference type="RefSeq" id="WP_012292695.1">
    <property type="nucleotide sequence ID" value="NC_010382.1"/>
</dbReference>
<dbReference type="SMR" id="B1I012"/>
<dbReference type="EnsemblBacteria" id="ACA38550">
    <property type="protein sequence ID" value="ACA38550"/>
    <property type="gene ID" value="Bsph_0938"/>
</dbReference>
<dbReference type="KEGG" id="lsp:Bsph_0938"/>
<dbReference type="HOGENOM" id="CLU_032162_3_0_9"/>
<dbReference type="Proteomes" id="UP000002164">
    <property type="component" value="Chromosome"/>
</dbReference>
<dbReference type="GO" id="GO:0005737">
    <property type="term" value="C:cytoplasm"/>
    <property type="evidence" value="ECO:0007669"/>
    <property type="project" value="UniProtKB-SubCell"/>
</dbReference>
<dbReference type="GO" id="GO:0004844">
    <property type="term" value="F:uracil DNA N-glycosylase activity"/>
    <property type="evidence" value="ECO:0007669"/>
    <property type="project" value="UniProtKB-UniRule"/>
</dbReference>
<dbReference type="GO" id="GO:0097510">
    <property type="term" value="P:base-excision repair, AP site formation via deaminated base removal"/>
    <property type="evidence" value="ECO:0007669"/>
    <property type="project" value="TreeGrafter"/>
</dbReference>
<dbReference type="CDD" id="cd10027">
    <property type="entry name" value="UDG-F1-like"/>
    <property type="match status" value="1"/>
</dbReference>
<dbReference type="FunFam" id="3.40.470.10:FF:000001">
    <property type="entry name" value="Uracil-DNA glycosylase"/>
    <property type="match status" value="1"/>
</dbReference>
<dbReference type="Gene3D" id="3.40.470.10">
    <property type="entry name" value="Uracil-DNA glycosylase-like domain"/>
    <property type="match status" value="1"/>
</dbReference>
<dbReference type="HAMAP" id="MF_00148">
    <property type="entry name" value="UDG"/>
    <property type="match status" value="1"/>
</dbReference>
<dbReference type="InterPro" id="IPR002043">
    <property type="entry name" value="UDG_fam1"/>
</dbReference>
<dbReference type="InterPro" id="IPR018085">
    <property type="entry name" value="Ura-DNA_Glyclase_AS"/>
</dbReference>
<dbReference type="InterPro" id="IPR005122">
    <property type="entry name" value="Uracil-DNA_glycosylase-like"/>
</dbReference>
<dbReference type="InterPro" id="IPR036895">
    <property type="entry name" value="Uracil-DNA_glycosylase-like_sf"/>
</dbReference>
<dbReference type="NCBIfam" id="NF003588">
    <property type="entry name" value="PRK05254.1-1"/>
    <property type="match status" value="1"/>
</dbReference>
<dbReference type="NCBIfam" id="NF003589">
    <property type="entry name" value="PRK05254.1-2"/>
    <property type="match status" value="1"/>
</dbReference>
<dbReference type="NCBIfam" id="NF003591">
    <property type="entry name" value="PRK05254.1-4"/>
    <property type="match status" value="1"/>
</dbReference>
<dbReference type="NCBIfam" id="NF003592">
    <property type="entry name" value="PRK05254.1-5"/>
    <property type="match status" value="1"/>
</dbReference>
<dbReference type="NCBIfam" id="TIGR00628">
    <property type="entry name" value="ung"/>
    <property type="match status" value="1"/>
</dbReference>
<dbReference type="PANTHER" id="PTHR11264">
    <property type="entry name" value="URACIL-DNA GLYCOSYLASE"/>
    <property type="match status" value="1"/>
</dbReference>
<dbReference type="PANTHER" id="PTHR11264:SF0">
    <property type="entry name" value="URACIL-DNA GLYCOSYLASE"/>
    <property type="match status" value="1"/>
</dbReference>
<dbReference type="Pfam" id="PF03167">
    <property type="entry name" value="UDG"/>
    <property type="match status" value="1"/>
</dbReference>
<dbReference type="SMART" id="SM00986">
    <property type="entry name" value="UDG"/>
    <property type="match status" value="1"/>
</dbReference>
<dbReference type="SMART" id="SM00987">
    <property type="entry name" value="UreE_C"/>
    <property type="match status" value="1"/>
</dbReference>
<dbReference type="SUPFAM" id="SSF52141">
    <property type="entry name" value="Uracil-DNA glycosylase-like"/>
    <property type="match status" value="1"/>
</dbReference>
<dbReference type="PROSITE" id="PS00130">
    <property type="entry name" value="U_DNA_GLYCOSYLASE"/>
    <property type="match status" value="1"/>
</dbReference>
<reference key="1">
    <citation type="journal article" date="2008" name="J. Bacteriol.">
        <title>Complete genome sequence of the mosquitocidal bacterium Bacillus sphaericus C3-41 and comparison with those of closely related Bacillus species.</title>
        <authorList>
            <person name="Hu X."/>
            <person name="Fan W."/>
            <person name="Han B."/>
            <person name="Liu H."/>
            <person name="Zheng D."/>
            <person name="Li Q."/>
            <person name="Dong W."/>
            <person name="Yan J."/>
            <person name="Gao M."/>
            <person name="Berry C."/>
            <person name="Yuan Z."/>
        </authorList>
    </citation>
    <scope>NUCLEOTIDE SEQUENCE [LARGE SCALE GENOMIC DNA]</scope>
    <source>
        <strain>C3-41</strain>
    </source>
</reference>
<protein>
    <recommendedName>
        <fullName evidence="1">Uracil-DNA glycosylase</fullName>
        <shortName evidence="1">UDG</shortName>
        <ecNumber evidence="1">3.2.2.27</ecNumber>
    </recommendedName>
</protein>
<keyword id="KW-0963">Cytoplasm</keyword>
<keyword id="KW-0227">DNA damage</keyword>
<keyword id="KW-0234">DNA repair</keyword>
<keyword id="KW-0378">Hydrolase</keyword>
<comment type="function">
    <text evidence="1">Excises uracil residues from the DNA which can arise as a result of misincorporation of dUMP residues by DNA polymerase or due to deamination of cytosine.</text>
</comment>
<comment type="catalytic activity">
    <reaction evidence="1">
        <text>Hydrolyzes single-stranded DNA or mismatched double-stranded DNA and polynucleotides, releasing free uracil.</text>
        <dbReference type="EC" id="3.2.2.27"/>
    </reaction>
</comment>
<comment type="subcellular location">
    <subcellularLocation>
        <location evidence="1">Cytoplasm</location>
    </subcellularLocation>
</comment>
<comment type="similarity">
    <text evidence="1">Belongs to the uracil-DNA glycosylase (UDG) superfamily. UNG family.</text>
</comment>
<name>UNG_LYSSC</name>
<gene>
    <name evidence="1" type="primary">ung</name>
    <name type="ordered locus">Bsph_0938</name>
</gene>
<feature type="chain" id="PRO_1000096593" description="Uracil-DNA glycosylase">
    <location>
        <begin position="1"/>
        <end position="225"/>
    </location>
</feature>
<feature type="active site" description="Proton acceptor" evidence="1">
    <location>
        <position position="65"/>
    </location>
</feature>
<evidence type="ECO:0000255" key="1">
    <source>
        <dbReference type="HAMAP-Rule" id="MF_00148"/>
    </source>
</evidence>
<proteinExistence type="inferred from homology"/>